<geneLocation type="mitochondrion"/>
<reference key="1">
    <citation type="journal article" date="1992" name="Genetics">
        <title>The mitochondrial genomes of two nematodes, Caenorhabditis elegans and Ascaris suum.</title>
        <authorList>
            <person name="Okimoto R."/>
            <person name="Macfarlane J.L."/>
            <person name="Clary D.O."/>
            <person name="Wolstenholme D.R."/>
        </authorList>
    </citation>
    <scope>NUCLEOTIDE SEQUENCE [GENOMIC DNA]</scope>
    <source>
        <tissue>Body wall muscle</tissue>
        <tissue>Egg</tissue>
    </source>
</reference>
<feature type="chain" id="PRO_0000117348" description="NADH-ubiquinone oxidoreductase chain 1">
    <location>
        <begin position="1"/>
        <end position="290"/>
    </location>
</feature>
<feature type="transmembrane region" description="Helical" evidence="2">
    <location>
        <begin position="2"/>
        <end position="22"/>
    </location>
</feature>
<feature type="transmembrane region" description="Helical" evidence="2">
    <location>
        <begin position="73"/>
        <end position="93"/>
    </location>
</feature>
<feature type="transmembrane region" description="Helical" evidence="2">
    <location>
        <begin position="104"/>
        <end position="124"/>
    </location>
</feature>
<feature type="transmembrane region" description="Helical" evidence="2">
    <location>
        <begin position="142"/>
        <end position="162"/>
    </location>
</feature>
<feature type="transmembrane region" description="Helical" evidence="2">
    <location>
        <begin position="164"/>
        <end position="184"/>
    </location>
</feature>
<feature type="transmembrane region" description="Helical" evidence="2">
    <location>
        <begin position="212"/>
        <end position="232"/>
    </location>
</feature>
<feature type="transmembrane region" description="Helical" evidence="2">
    <location>
        <begin position="234"/>
        <end position="254"/>
    </location>
</feature>
<feature type="transmembrane region" description="Helical" evidence="2">
    <location>
        <begin position="269"/>
        <end position="289"/>
    </location>
</feature>
<sequence length="290" mass="33673">MILMLVQVILIMIFVIQSIAFVTLYERHLLGGSQQRIGPNKVSFMGFLQAIFDGVKLLKKEQMTPLNSSEISFILVPGIFFIVMYLEWFVLPFFYDFMTFEYSILFFLCLIGFSVYTTLVSGMVSKSKYGMVGAIRASSQSVSYEIAFSLYLLAIVMHINMFCFFSFFNLSLFIVYLPFLFMVLAELNRAPFDFAEGESELVSGYNVEYSSVAFVLLFLGEYGALLFFSTLTSVLFFGFSYVVIYCMFTILVFVRSSYPRFRYDLMMYFFWFKLLPVSLIFLGYFVIFLF</sequence>
<name>NU1M_ASCSU</name>
<organism>
    <name type="scientific">Ascaris suum</name>
    <name type="common">Pig roundworm</name>
    <name type="synonym">Ascaris lumbricoides</name>
    <dbReference type="NCBI Taxonomy" id="6253"/>
    <lineage>
        <taxon>Eukaryota</taxon>
        <taxon>Metazoa</taxon>
        <taxon>Ecdysozoa</taxon>
        <taxon>Nematoda</taxon>
        <taxon>Chromadorea</taxon>
        <taxon>Rhabditida</taxon>
        <taxon>Spirurina</taxon>
        <taxon>Ascaridomorpha</taxon>
        <taxon>Ascaridoidea</taxon>
        <taxon>Ascarididae</taxon>
        <taxon>Ascaris</taxon>
    </lineage>
</organism>
<keyword id="KW-0249">Electron transport</keyword>
<keyword id="KW-0472">Membrane</keyword>
<keyword id="KW-0496">Mitochondrion</keyword>
<keyword id="KW-0999">Mitochondrion inner membrane</keyword>
<keyword id="KW-0520">NAD</keyword>
<keyword id="KW-0679">Respiratory chain</keyword>
<keyword id="KW-1278">Translocase</keyword>
<keyword id="KW-0812">Transmembrane</keyword>
<keyword id="KW-1133">Transmembrane helix</keyword>
<keyword id="KW-0813">Transport</keyword>
<keyword id="KW-0830">Ubiquinone</keyword>
<dbReference type="EC" id="7.1.1.2"/>
<dbReference type="EMBL" id="X54253">
    <property type="protein sequence ID" value="CAA38165.1"/>
    <property type="molecule type" value="Genomic_DNA"/>
</dbReference>
<dbReference type="PIR" id="S26016">
    <property type="entry name" value="S26016"/>
</dbReference>
<dbReference type="RefSeq" id="NP_006943.1">
    <property type="nucleotide sequence ID" value="NC_001327.1"/>
</dbReference>
<dbReference type="SMR" id="P24875"/>
<dbReference type="GeneID" id="807667"/>
<dbReference type="CTD" id="4535"/>
<dbReference type="GO" id="GO:0005743">
    <property type="term" value="C:mitochondrial inner membrane"/>
    <property type="evidence" value="ECO:0007669"/>
    <property type="project" value="UniProtKB-SubCell"/>
</dbReference>
<dbReference type="GO" id="GO:0008137">
    <property type="term" value="F:NADH dehydrogenase (ubiquinone) activity"/>
    <property type="evidence" value="ECO:0007669"/>
    <property type="project" value="UniProtKB-EC"/>
</dbReference>
<dbReference type="GO" id="GO:0009060">
    <property type="term" value="P:aerobic respiration"/>
    <property type="evidence" value="ECO:0007669"/>
    <property type="project" value="TreeGrafter"/>
</dbReference>
<dbReference type="InterPro" id="IPR001694">
    <property type="entry name" value="NADH_UbQ_OxRdtase_su1/FPO"/>
</dbReference>
<dbReference type="InterPro" id="IPR018086">
    <property type="entry name" value="NADH_UbQ_OxRdtase_su1_CS"/>
</dbReference>
<dbReference type="PANTHER" id="PTHR11432">
    <property type="entry name" value="NADH DEHYDROGENASE SUBUNIT 1"/>
    <property type="match status" value="1"/>
</dbReference>
<dbReference type="PANTHER" id="PTHR11432:SF3">
    <property type="entry name" value="NADH-UBIQUINONE OXIDOREDUCTASE CHAIN 1"/>
    <property type="match status" value="1"/>
</dbReference>
<dbReference type="Pfam" id="PF00146">
    <property type="entry name" value="NADHdh"/>
    <property type="match status" value="1"/>
</dbReference>
<dbReference type="PROSITE" id="PS00667">
    <property type="entry name" value="COMPLEX1_ND1_1"/>
    <property type="match status" value="1"/>
</dbReference>
<dbReference type="PROSITE" id="PS00668">
    <property type="entry name" value="COMPLEX1_ND1_2"/>
    <property type="match status" value="1"/>
</dbReference>
<gene>
    <name type="primary">ND1</name>
</gene>
<proteinExistence type="inferred from homology"/>
<evidence type="ECO:0000250" key="1"/>
<evidence type="ECO:0000255" key="2"/>
<evidence type="ECO:0000305" key="3"/>
<protein>
    <recommendedName>
        <fullName>NADH-ubiquinone oxidoreductase chain 1</fullName>
        <ecNumber>7.1.1.2</ecNumber>
    </recommendedName>
    <alternativeName>
        <fullName>NADH dehydrogenase subunit 1</fullName>
    </alternativeName>
</protein>
<comment type="function">
    <text evidence="1">Core subunit of the mitochondrial membrane respiratory chain NADH dehydrogenase (Complex I) that is believed to belong to the minimal assembly required for catalysis. Complex I functions in the transfer of electrons from NADH to the respiratory chain. The immediate electron acceptor for the enzyme is believed to be ubiquinone (By similarity).</text>
</comment>
<comment type="catalytic activity">
    <reaction>
        <text>a ubiquinone + NADH + 5 H(+)(in) = a ubiquinol + NAD(+) + 4 H(+)(out)</text>
        <dbReference type="Rhea" id="RHEA:29091"/>
        <dbReference type="Rhea" id="RHEA-COMP:9565"/>
        <dbReference type="Rhea" id="RHEA-COMP:9566"/>
        <dbReference type="ChEBI" id="CHEBI:15378"/>
        <dbReference type="ChEBI" id="CHEBI:16389"/>
        <dbReference type="ChEBI" id="CHEBI:17976"/>
        <dbReference type="ChEBI" id="CHEBI:57540"/>
        <dbReference type="ChEBI" id="CHEBI:57945"/>
        <dbReference type="EC" id="7.1.1.2"/>
    </reaction>
</comment>
<comment type="subcellular location">
    <subcellularLocation>
        <location evidence="1">Mitochondrion inner membrane</location>
        <topology evidence="1">Multi-pass membrane protein</topology>
    </subcellularLocation>
</comment>
<comment type="similarity">
    <text evidence="3">Belongs to the complex I subunit 1 family.</text>
</comment>
<accession>P24875</accession>